<gene>
    <name evidence="10" type="primary">GA3OX2</name>
    <name evidence="11" type="synonym">GA4H</name>
    <name evidence="13" type="ordered locus">At1g80340</name>
    <name evidence="14" type="ORF">F5I6.9</name>
</gene>
<proteinExistence type="evidence at protein level"/>
<organism>
    <name type="scientific">Arabidopsis thaliana</name>
    <name type="common">Mouse-ear cress</name>
    <dbReference type="NCBI Taxonomy" id="3702"/>
    <lineage>
        <taxon>Eukaryota</taxon>
        <taxon>Viridiplantae</taxon>
        <taxon>Streptophyta</taxon>
        <taxon>Embryophyta</taxon>
        <taxon>Tracheophyta</taxon>
        <taxon>Spermatophyta</taxon>
        <taxon>Magnoliopsida</taxon>
        <taxon>eudicotyledons</taxon>
        <taxon>Gunneridae</taxon>
        <taxon>Pentapetalae</taxon>
        <taxon>rosids</taxon>
        <taxon>malvids</taxon>
        <taxon>Brassicales</taxon>
        <taxon>Brassicaceae</taxon>
        <taxon>Camelineae</taxon>
        <taxon>Arabidopsis</taxon>
    </lineage>
</organism>
<keyword id="KW-0223">Dioxygenase</keyword>
<keyword id="KW-0408">Iron</keyword>
<keyword id="KW-0479">Metal-binding</keyword>
<keyword id="KW-0560">Oxidoreductase</keyword>
<keyword id="KW-1185">Reference proteome</keyword>
<reference key="1">
    <citation type="journal article" date="1998" name="Plant Cell">
        <title>Phytochrome regulation and differential expression of gibberellin 3beta-hydroxylase genes in germinating Arabidopsis seeds.</title>
        <authorList>
            <person name="Yamaguchi S."/>
            <person name="Smith M.W."/>
            <person name="Brown R.G.S."/>
            <person name="Kamiya Y."/>
            <person name="Sun T.-P."/>
        </authorList>
    </citation>
    <scope>NUCLEOTIDE SEQUENCE [MRNA]</scope>
    <scope>FUNCTION</scope>
    <scope>CATALYTIC ACTIVITY</scope>
    <scope>INDUCTION</scope>
    <scope>BIOPHYSICOCHEMICAL PROPERTIES</scope>
    <scope>DEVELOPMENTAL STAGE</scope>
</reference>
<reference key="2">
    <citation type="journal article" date="2000" name="Nature">
        <title>Sequence and analysis of chromosome 1 of the plant Arabidopsis thaliana.</title>
        <authorList>
            <person name="Theologis A."/>
            <person name="Ecker J.R."/>
            <person name="Palm C.J."/>
            <person name="Federspiel N.A."/>
            <person name="Kaul S."/>
            <person name="White O."/>
            <person name="Alonso J."/>
            <person name="Altafi H."/>
            <person name="Araujo R."/>
            <person name="Bowman C.L."/>
            <person name="Brooks S.Y."/>
            <person name="Buehler E."/>
            <person name="Chan A."/>
            <person name="Chao Q."/>
            <person name="Chen H."/>
            <person name="Cheuk R.F."/>
            <person name="Chin C.W."/>
            <person name="Chung M.K."/>
            <person name="Conn L."/>
            <person name="Conway A.B."/>
            <person name="Conway A.R."/>
            <person name="Creasy T.H."/>
            <person name="Dewar K."/>
            <person name="Dunn P."/>
            <person name="Etgu P."/>
            <person name="Feldblyum T.V."/>
            <person name="Feng J.-D."/>
            <person name="Fong B."/>
            <person name="Fujii C.Y."/>
            <person name="Gill J.E."/>
            <person name="Goldsmith A.D."/>
            <person name="Haas B."/>
            <person name="Hansen N.F."/>
            <person name="Hughes B."/>
            <person name="Huizar L."/>
            <person name="Hunter J.L."/>
            <person name="Jenkins J."/>
            <person name="Johnson-Hopson C."/>
            <person name="Khan S."/>
            <person name="Khaykin E."/>
            <person name="Kim C.J."/>
            <person name="Koo H.L."/>
            <person name="Kremenetskaia I."/>
            <person name="Kurtz D.B."/>
            <person name="Kwan A."/>
            <person name="Lam B."/>
            <person name="Langin-Hooper S."/>
            <person name="Lee A."/>
            <person name="Lee J.M."/>
            <person name="Lenz C.A."/>
            <person name="Li J.H."/>
            <person name="Li Y.-P."/>
            <person name="Lin X."/>
            <person name="Liu S.X."/>
            <person name="Liu Z.A."/>
            <person name="Luros J.S."/>
            <person name="Maiti R."/>
            <person name="Marziali A."/>
            <person name="Militscher J."/>
            <person name="Miranda M."/>
            <person name="Nguyen M."/>
            <person name="Nierman W.C."/>
            <person name="Osborne B.I."/>
            <person name="Pai G."/>
            <person name="Peterson J."/>
            <person name="Pham P.K."/>
            <person name="Rizzo M."/>
            <person name="Rooney T."/>
            <person name="Rowley D."/>
            <person name="Sakano H."/>
            <person name="Salzberg S.L."/>
            <person name="Schwartz J.R."/>
            <person name="Shinn P."/>
            <person name="Southwick A.M."/>
            <person name="Sun H."/>
            <person name="Tallon L.J."/>
            <person name="Tambunga G."/>
            <person name="Toriumi M.J."/>
            <person name="Town C.D."/>
            <person name="Utterback T."/>
            <person name="Van Aken S."/>
            <person name="Vaysberg M."/>
            <person name="Vysotskaia V.S."/>
            <person name="Walker M."/>
            <person name="Wu D."/>
            <person name="Yu G."/>
            <person name="Fraser C.M."/>
            <person name="Venter J.C."/>
            <person name="Davis R.W."/>
        </authorList>
    </citation>
    <scope>NUCLEOTIDE SEQUENCE [LARGE SCALE GENOMIC DNA]</scope>
    <source>
        <strain>cv. Columbia</strain>
    </source>
</reference>
<reference key="3">
    <citation type="journal article" date="2017" name="Plant J.">
        <title>Araport11: a complete reannotation of the Arabidopsis thaliana reference genome.</title>
        <authorList>
            <person name="Cheng C.Y."/>
            <person name="Krishnakumar V."/>
            <person name="Chan A.P."/>
            <person name="Thibaud-Nissen F."/>
            <person name="Schobel S."/>
            <person name="Town C.D."/>
        </authorList>
    </citation>
    <scope>GENOME REANNOTATION</scope>
    <source>
        <strain>cv. Columbia</strain>
    </source>
</reference>
<reference key="4">
    <citation type="journal article" date="2001" name="Plant J.">
        <title>Distinct cell-specific expression patterns of early and late gibberellin biosynthetic genes during Arabidopsis seed germination.</title>
        <authorList>
            <person name="Yamaguchi S."/>
            <person name="Kamiya Y."/>
            <person name="Sun T.-P."/>
        </authorList>
    </citation>
    <scope>TISSUE SPECIFICITY</scope>
</reference>
<reference key="5">
    <citation type="journal article" date="2004" name="Plant Cell">
        <title>Activation of gibberellin biosynthesis and response pathways by low temperature during imbibition of Arabidopsis thaliana seeds.</title>
        <authorList>
            <person name="Yamauchi Y."/>
            <person name="Ogawa M."/>
            <person name="Kuwahara A."/>
            <person name="Hanada A."/>
            <person name="Kamiya Y."/>
            <person name="Yamaguchi S."/>
        </authorList>
    </citation>
    <scope>INDUCTION BY COLD</scope>
</reference>
<reference key="6">
    <citation type="journal article" date="2004" name="Plant Physiol.">
        <title>AtGA3ox2, a key gene responsible for bioactive gibberellin biosynthesis, is regulated during embryogenesis by LEAFY COTYLEDON2 and FUSCA3 in Arabidopsis.</title>
        <authorList>
            <person name="Curaba J."/>
            <person name="Moritz T."/>
            <person name="Blervaque R."/>
            <person name="Parcy F."/>
            <person name="Raz V."/>
            <person name="Herzog M."/>
            <person name="Vachon G."/>
        </authorList>
    </citation>
    <scope>CHARACTERIZATION</scope>
    <scope>REGULATION</scope>
</reference>
<reference key="7">
    <citation type="journal article" date="2006" name="Plant J.">
        <title>Distinct and overlapping roles of two gibberellin 3-oxidases in Arabidopsis development.</title>
        <authorList>
            <person name="Mitchum M.G."/>
            <person name="Yamaguchi S."/>
            <person name="Hanada A."/>
            <person name="Kuwahara A."/>
            <person name="Yoshioka Y."/>
            <person name="Kato T."/>
            <person name="Tabata S."/>
            <person name="Kamiya Y."/>
            <person name="Sun T.P."/>
        </authorList>
    </citation>
    <scope>FUNCTION</scope>
    <scope>TISSUE SPECIFICITY</scope>
    <scope>DEVELOPMENTAL STAGE</scope>
    <scope>DISRUPTION PHENOTYPE</scope>
</reference>
<reference key="8">
    <citation type="journal article" date="2006" name="Plant Physiol.">
        <title>Transcriptional regulation of gibberellin metabolism genes by auxin signaling in Arabidopsis.</title>
        <authorList>
            <person name="Frigerio M."/>
            <person name="Alabadi D."/>
            <person name="Perez-Gomez J."/>
            <person name="Garcia-Carcel L."/>
            <person name="Phillips A.L."/>
            <person name="Hedden P."/>
            <person name="Blazquez M.A."/>
        </authorList>
    </citation>
    <scope>INDUCTION BY AUXIN AND PACLOBUTRAZOL</scope>
</reference>
<reference key="9">
    <citation type="journal article" date="2007" name="Plant Physiol.">
        <title>AGF1, an AT-hook protein, is necessary for the negative feedback of AtGA3ox1 encoding GA 3-oxidase.</title>
        <authorList>
            <person name="Matsushita A."/>
            <person name="Furumoto T."/>
            <person name="Ishida S."/>
            <person name="Takahashi Y."/>
        </authorList>
    </citation>
    <scope>TISSUE SPECIFICITY</scope>
</reference>
<reference key="10">
    <citation type="journal article" date="2011" name="Gene">
        <title>Evolutionary analysis of three gibberellin oxidase genes in rice, Arabidopsis, and soybean.</title>
        <authorList>
            <person name="Han F."/>
            <person name="Zhu B."/>
        </authorList>
    </citation>
    <scope>GENE FAMILY</scope>
</reference>
<name>G3OX2_ARATH</name>
<feature type="chain" id="PRO_0000067314" description="Gibberellin 3-beta-dioxygenase 2">
    <location>
        <begin position="1"/>
        <end position="347"/>
    </location>
</feature>
<feature type="domain" description="Fe2OG dioxygenase" evidence="3">
    <location>
        <begin position="197"/>
        <end position="301"/>
    </location>
</feature>
<feature type="active site" evidence="2">
    <location>
        <position position="292"/>
    </location>
</feature>
<feature type="binding site" evidence="3">
    <location>
        <position position="225"/>
    </location>
    <ligand>
        <name>Fe cation</name>
        <dbReference type="ChEBI" id="CHEBI:24875"/>
    </ligand>
</feature>
<feature type="binding site" evidence="3">
    <location>
        <position position="227"/>
    </location>
    <ligand>
        <name>Fe cation</name>
        <dbReference type="ChEBI" id="CHEBI:24875"/>
    </ligand>
</feature>
<feature type="binding site" evidence="3">
    <location>
        <position position="282"/>
    </location>
    <ligand>
        <name>Fe cation</name>
        <dbReference type="ChEBI" id="CHEBI:24875"/>
    </ligand>
</feature>
<feature type="binding site" evidence="3">
    <location>
        <position position="292"/>
    </location>
    <ligand>
        <name>2-oxoglutarate</name>
        <dbReference type="ChEBI" id="CHEBI:16810"/>
    </ligand>
</feature>
<feature type="sequence conflict" description="In Ref. 1; AAC83647." evidence="12" ref="1">
    <original>V</original>
    <variation>A</variation>
    <location>
        <position position="204"/>
    </location>
</feature>
<feature type="sequence conflict" description="In Ref. 1; AAC83647." evidence="12" ref="1">
    <original>I</original>
    <variation>V</variation>
    <location>
        <position position="305"/>
    </location>
</feature>
<sequence length="347" mass="38782">MSSTLSDVFRSHPIHIPLSNPPDFKSLPDSYTWTPKDDLLFSASASDETLPLIDLSDIHVATLVGHACTTWGAFQITNHGVPSRLLDDIEFLTGSLFRLPVQRKLKAARSENGVSGYGVARIASFFNKKMWSEGFTVIGSPLHDFRKLWPSHHLKYCEIIEEYEEHMQKLAAKLMWFALGSLGVEEKDIQWAGPNSDFQGTQAVIQLNHYPKCPEPDRAMGLAAHTDSTLMTILYQNNTAGLQVFRDDVGWVTAPPVPGSLVVNVGDLLHILTNGIFPSVLHRARVNHVRSRFSMAYLWGPPSDIMISPLPKLVDPLQSPLYPSLTWKQYLATKATHFNQSLSIIRN</sequence>
<accession>Q9ZT84</accession>
<accession>Q9C970</accession>
<dbReference type="EC" id="1.14.11.15"/>
<dbReference type="EMBL" id="AF070937">
    <property type="protein sequence ID" value="AAC83647.1"/>
    <property type="molecule type" value="mRNA"/>
</dbReference>
<dbReference type="EMBL" id="AC018848">
    <property type="protein sequence ID" value="AAG52442.1"/>
    <property type="molecule type" value="Genomic_DNA"/>
</dbReference>
<dbReference type="EMBL" id="CP002684">
    <property type="protein sequence ID" value="AEE36389.1"/>
    <property type="molecule type" value="Genomic_DNA"/>
</dbReference>
<dbReference type="PIR" id="A96835">
    <property type="entry name" value="A96835"/>
</dbReference>
<dbReference type="PIR" id="T51691">
    <property type="entry name" value="T51691"/>
</dbReference>
<dbReference type="RefSeq" id="NP_178150.1">
    <property type="nucleotide sequence ID" value="NM_106683.2"/>
</dbReference>
<dbReference type="SMR" id="Q9ZT84"/>
<dbReference type="BioGRID" id="29592">
    <property type="interactions" value="2"/>
</dbReference>
<dbReference type="FunCoup" id="Q9ZT84">
    <property type="interactions" value="21"/>
</dbReference>
<dbReference type="IntAct" id="Q9ZT84">
    <property type="interactions" value="2"/>
</dbReference>
<dbReference type="STRING" id="3702.Q9ZT84"/>
<dbReference type="PaxDb" id="3702-AT1G80340.1"/>
<dbReference type="EnsemblPlants" id="AT1G80340.1">
    <property type="protein sequence ID" value="AT1G80340.1"/>
    <property type="gene ID" value="AT1G80340"/>
</dbReference>
<dbReference type="GeneID" id="844374"/>
<dbReference type="Gramene" id="AT1G80340.1">
    <property type="protein sequence ID" value="AT1G80340.1"/>
    <property type="gene ID" value="AT1G80340"/>
</dbReference>
<dbReference type="KEGG" id="ath:AT1G80340"/>
<dbReference type="Araport" id="AT1G80340"/>
<dbReference type="TAIR" id="AT1G80340">
    <property type="gene designation" value="GA3OX2"/>
</dbReference>
<dbReference type="eggNOG" id="KOG0143">
    <property type="taxonomic scope" value="Eukaryota"/>
</dbReference>
<dbReference type="HOGENOM" id="CLU_010119_16_3_1"/>
<dbReference type="InParanoid" id="Q9ZT84"/>
<dbReference type="OMA" id="AGKLMWL"/>
<dbReference type="PhylomeDB" id="Q9ZT84"/>
<dbReference type="BioCyc" id="ARA:AT1G80340-MONOMER"/>
<dbReference type="BioCyc" id="MetaCyc:AT1G80340-MONOMER"/>
<dbReference type="BRENDA" id="1.14.11.15">
    <property type="organism ID" value="399"/>
</dbReference>
<dbReference type="SABIO-RK" id="Q9ZT84"/>
<dbReference type="UniPathway" id="UPA00390"/>
<dbReference type="PRO" id="PR:Q9ZT84"/>
<dbReference type="Proteomes" id="UP000006548">
    <property type="component" value="Chromosome 1"/>
</dbReference>
<dbReference type="ExpressionAtlas" id="Q9ZT84">
    <property type="expression patterns" value="baseline and differential"/>
</dbReference>
<dbReference type="GO" id="GO:0016707">
    <property type="term" value="F:gibberellin 3-beta-dioxygenase activity"/>
    <property type="evidence" value="ECO:0000314"/>
    <property type="project" value="TAIR"/>
</dbReference>
<dbReference type="GO" id="GO:0046872">
    <property type="term" value="F:metal ion binding"/>
    <property type="evidence" value="ECO:0007669"/>
    <property type="project" value="UniProtKB-KW"/>
</dbReference>
<dbReference type="GO" id="GO:0009686">
    <property type="term" value="P:gibberellin biosynthetic process"/>
    <property type="evidence" value="ECO:0000304"/>
    <property type="project" value="TAIR"/>
</dbReference>
<dbReference type="GO" id="GO:0010114">
    <property type="term" value="P:response to red light"/>
    <property type="evidence" value="ECO:0000270"/>
    <property type="project" value="TAIR"/>
</dbReference>
<dbReference type="GO" id="GO:0009639">
    <property type="term" value="P:response to red or far red light"/>
    <property type="evidence" value="ECO:0000270"/>
    <property type="project" value="TAIR"/>
</dbReference>
<dbReference type="FunFam" id="2.60.120.330:FF:000013">
    <property type="entry name" value="Gibberellin 3-beta-dioxygenase 1"/>
    <property type="match status" value="1"/>
</dbReference>
<dbReference type="Gene3D" id="2.60.120.330">
    <property type="entry name" value="B-lactam Antibiotic, Isopenicillin N Synthase, Chain"/>
    <property type="match status" value="1"/>
</dbReference>
<dbReference type="InterPro" id="IPR026992">
    <property type="entry name" value="DIOX_N"/>
</dbReference>
<dbReference type="InterPro" id="IPR044861">
    <property type="entry name" value="IPNS-like_FE2OG_OXY"/>
</dbReference>
<dbReference type="InterPro" id="IPR027443">
    <property type="entry name" value="IPNS-like_sf"/>
</dbReference>
<dbReference type="InterPro" id="IPR050231">
    <property type="entry name" value="Iron_ascorbate_oxido_reductase"/>
</dbReference>
<dbReference type="InterPro" id="IPR005123">
    <property type="entry name" value="Oxoglu/Fe-dep_dioxygenase_dom"/>
</dbReference>
<dbReference type="PANTHER" id="PTHR47990">
    <property type="entry name" value="2-OXOGLUTARATE (2OG) AND FE(II)-DEPENDENT OXYGENASE SUPERFAMILY PROTEIN-RELATED"/>
    <property type="match status" value="1"/>
</dbReference>
<dbReference type="Pfam" id="PF03171">
    <property type="entry name" value="2OG-FeII_Oxy"/>
    <property type="match status" value="1"/>
</dbReference>
<dbReference type="Pfam" id="PF14226">
    <property type="entry name" value="DIOX_N"/>
    <property type="match status" value="1"/>
</dbReference>
<dbReference type="SUPFAM" id="SSF51197">
    <property type="entry name" value="Clavaminate synthase-like"/>
    <property type="match status" value="1"/>
</dbReference>
<dbReference type="PROSITE" id="PS51471">
    <property type="entry name" value="FE2OG_OXY"/>
    <property type="match status" value="1"/>
</dbReference>
<comment type="function">
    <text evidence="6 9">Converts the inactive gibberellin (GA) precursors GA9 and GA20 in the bioactives gibberellins GA4 and GA1 (PubMed:9836749). Involved in the production of bioactive GA for vegetative growth and development (PubMed:16460513).</text>
</comment>
<comment type="catalytic activity">
    <reaction evidence="9">
        <text>gibberellin A20 + 2-oxoglutarate + O2 = gibberellin A1 + succinate + CO2</text>
        <dbReference type="Rhea" id="RHEA:10104"/>
        <dbReference type="ChEBI" id="CHEBI:15379"/>
        <dbReference type="ChEBI" id="CHEBI:16526"/>
        <dbReference type="ChEBI" id="CHEBI:16810"/>
        <dbReference type="ChEBI" id="CHEBI:30031"/>
        <dbReference type="ChEBI" id="CHEBI:58524"/>
        <dbReference type="ChEBI" id="CHEBI:58526"/>
        <dbReference type="EC" id="1.14.11.15"/>
    </reaction>
    <physiologicalReaction direction="left-to-right" evidence="9">
        <dbReference type="Rhea" id="RHEA:10105"/>
    </physiologicalReaction>
</comment>
<comment type="cofactor">
    <cofactor evidence="1">
        <name>L-ascorbate</name>
        <dbReference type="ChEBI" id="CHEBI:38290"/>
    </cofactor>
</comment>
<comment type="cofactor">
    <cofactor evidence="3">
        <name>Fe(2+)</name>
        <dbReference type="ChEBI" id="CHEBI:29033"/>
    </cofactor>
    <text evidence="3">Binds 1 Fe(2+) ion per subunit.</text>
</comment>
<comment type="biophysicochemical properties">
    <kinetics>
        <KM evidence="9">1 uM for GA9</KM>
        <KM evidence="9">13 uM for GA20</KM>
    </kinetics>
</comment>
<comment type="pathway">
    <text evidence="12">Plant hormone biosynthesis; gibberellin biosynthesis.</text>
</comment>
<comment type="interaction">
    <interactant intactId="EBI-25512974">
        <id>Q9ZT84</id>
    </interactant>
    <interactant intactId="EBI-697501">
        <id>Q9FVU9</id>
        <label>CSN5B</label>
    </interactant>
    <organismsDiffer>false</organismsDiffer>
    <experiments>3</experiments>
</comment>
<comment type="interaction">
    <interactant intactId="EBI-25512974">
        <id>Q9ZT84</id>
    </interactant>
    <interactant intactId="EBI-15192297">
        <id>Q9LQF0</id>
        <label>TCP23</label>
    </interactant>
    <organismsDiffer>false</organismsDiffer>
    <experiments>3</experiments>
</comment>
<comment type="tissue specificity">
    <text evidence="4 6 8">Highly expressed in seedlings but also expressed in roots, leaves, stems, flowers, siliques and seeds. Detected predominantly in the hypocotyl and roots of young seedlings and in the petioles and vasculature of leaves. Not expressed in the shoot apical meristem, but found in the elongation zone, the quiescent center cells and the columella cells of the root tips. Found in the cortex and the endodermis of the embryo axis in germinating seeds.</text>
</comment>
<comment type="developmental stage">
    <text evidence="6 9">Expressed in germinating seeds and in very young seedlings. Declines to low levels during later stages of development.</text>
</comment>
<comment type="induction">
    <text evidence="5 7 9">Not under feedback regulation. Regulated by phytochrome. Induced by red light pulse and reaches its maximum level after 12 hours. Transcriptionally regulated by LEAFY COTYLEDON2 and FUSCA3. Not regulated by cold treatment or auxin. Up-regulated by paclobutrazol.</text>
</comment>
<comment type="disruption phenotype">
    <text evidence="6">No visible phenotype; probably due to redundancy with GA3OX1. Ga3ox1 and ga3ox2 double mutant has a severe defect in seed germination and root growth, and a dwarf phenotype.</text>
</comment>
<comment type="similarity">
    <text evidence="12">Belongs to the iron/ascorbate-dependent oxidoreductase family. GA3OX subfamily.</text>
</comment>
<protein>
    <recommendedName>
        <fullName evidence="10">Gibberellin 3-beta-dioxygenase 2</fullName>
        <ecNumber>1.14.11.15</ecNumber>
    </recommendedName>
    <alternativeName>
        <fullName evidence="10">GA 3-oxidase 2</fullName>
        <shortName evidence="10">AtGA3ox2</shortName>
    </alternativeName>
    <alternativeName>
        <fullName evidence="12">Gibberellin 3 beta-hydroxylase 2</fullName>
    </alternativeName>
    <alternativeName>
        <fullName evidence="11">Protein GA4 homolog</fullName>
    </alternativeName>
</protein>
<evidence type="ECO:0000250" key="1">
    <source>
        <dbReference type="UniProtKB" id="Q5W726"/>
    </source>
</evidence>
<evidence type="ECO:0000255" key="2"/>
<evidence type="ECO:0000255" key="3">
    <source>
        <dbReference type="PROSITE-ProRule" id="PRU00805"/>
    </source>
</evidence>
<evidence type="ECO:0000269" key="4">
    <source>
    </source>
</evidence>
<evidence type="ECO:0000269" key="5">
    <source>
    </source>
</evidence>
<evidence type="ECO:0000269" key="6">
    <source>
    </source>
</evidence>
<evidence type="ECO:0000269" key="7">
    <source>
    </source>
</evidence>
<evidence type="ECO:0000269" key="8">
    <source>
    </source>
</evidence>
<evidence type="ECO:0000269" key="9">
    <source>
    </source>
</evidence>
<evidence type="ECO:0000303" key="10">
    <source>
    </source>
</evidence>
<evidence type="ECO:0000303" key="11">
    <source>
    </source>
</evidence>
<evidence type="ECO:0000305" key="12"/>
<evidence type="ECO:0000312" key="13">
    <source>
        <dbReference type="Araport" id="AT1G80340"/>
    </source>
</evidence>
<evidence type="ECO:0000312" key="14">
    <source>
        <dbReference type="EMBL" id="AAG52442.1"/>
    </source>
</evidence>